<evidence type="ECO:0000255" key="1">
    <source>
        <dbReference type="HAMAP-Rule" id="MF_00131"/>
    </source>
</evidence>
<feature type="chain" id="PRO_1000198714" description="Tryptophan synthase alpha chain">
    <location>
        <begin position="1"/>
        <end position="264"/>
    </location>
</feature>
<feature type="active site" description="Proton acceptor" evidence="1">
    <location>
        <position position="49"/>
    </location>
</feature>
<feature type="active site" description="Proton acceptor" evidence="1">
    <location>
        <position position="60"/>
    </location>
</feature>
<name>TRPA_GEODF</name>
<keyword id="KW-0028">Amino-acid biosynthesis</keyword>
<keyword id="KW-0057">Aromatic amino acid biosynthesis</keyword>
<keyword id="KW-0456">Lyase</keyword>
<keyword id="KW-1185">Reference proteome</keyword>
<keyword id="KW-0822">Tryptophan biosynthesis</keyword>
<proteinExistence type="inferred from homology"/>
<sequence>MGRIDNTFAKLAKNKKKALVTFITAGDPDLETTESLIIDLEKAGADLIELGVPFSDPMADGPTIQLSSERALAAGTTLPKILATVKSVRRKTQIPIILMGYYNPIFLHGVERFVSDAVAAGVDGVLLVDLPPEEAGEFKAIADRSGLAVIFLLTPTSDEERIRKVAHLGSGFIYYVSVTGVTGARSSVAENVFSDVQKIRKRVTLPVVVGFGISDPAQAGSIASVADGVVVGSALVRQFEQFSGKELHTKLSTMVSALKAGIAA</sequence>
<protein>
    <recommendedName>
        <fullName evidence="1">Tryptophan synthase alpha chain</fullName>
        <ecNumber evidence="1">4.2.1.20</ecNumber>
    </recommendedName>
</protein>
<accession>B9M7D5</accession>
<dbReference type="EC" id="4.2.1.20" evidence="1"/>
<dbReference type="EMBL" id="CP001390">
    <property type="protein sequence ID" value="ACM20223.1"/>
    <property type="molecule type" value="Genomic_DNA"/>
</dbReference>
<dbReference type="RefSeq" id="WP_012646952.1">
    <property type="nucleotide sequence ID" value="NC_011979.1"/>
</dbReference>
<dbReference type="SMR" id="B9M7D5"/>
<dbReference type="STRING" id="316067.Geob_1866"/>
<dbReference type="KEGG" id="geo:Geob_1866"/>
<dbReference type="eggNOG" id="COG0159">
    <property type="taxonomic scope" value="Bacteria"/>
</dbReference>
<dbReference type="HOGENOM" id="CLU_016734_0_2_7"/>
<dbReference type="OrthoDB" id="9804578at2"/>
<dbReference type="UniPathway" id="UPA00035">
    <property type="reaction ID" value="UER00044"/>
</dbReference>
<dbReference type="Proteomes" id="UP000007721">
    <property type="component" value="Chromosome"/>
</dbReference>
<dbReference type="GO" id="GO:0005829">
    <property type="term" value="C:cytosol"/>
    <property type="evidence" value="ECO:0007669"/>
    <property type="project" value="TreeGrafter"/>
</dbReference>
<dbReference type="GO" id="GO:0004834">
    <property type="term" value="F:tryptophan synthase activity"/>
    <property type="evidence" value="ECO:0007669"/>
    <property type="project" value="UniProtKB-UniRule"/>
</dbReference>
<dbReference type="CDD" id="cd04724">
    <property type="entry name" value="Tryptophan_synthase_alpha"/>
    <property type="match status" value="1"/>
</dbReference>
<dbReference type="FunFam" id="3.20.20.70:FF:000037">
    <property type="entry name" value="Tryptophan synthase alpha chain"/>
    <property type="match status" value="1"/>
</dbReference>
<dbReference type="Gene3D" id="3.20.20.70">
    <property type="entry name" value="Aldolase class I"/>
    <property type="match status" value="1"/>
</dbReference>
<dbReference type="HAMAP" id="MF_00131">
    <property type="entry name" value="Trp_synth_alpha"/>
    <property type="match status" value="1"/>
</dbReference>
<dbReference type="InterPro" id="IPR013785">
    <property type="entry name" value="Aldolase_TIM"/>
</dbReference>
<dbReference type="InterPro" id="IPR011060">
    <property type="entry name" value="RibuloseP-bd_barrel"/>
</dbReference>
<dbReference type="InterPro" id="IPR018204">
    <property type="entry name" value="Trp_synthase_alpha_AS"/>
</dbReference>
<dbReference type="InterPro" id="IPR002028">
    <property type="entry name" value="Trp_synthase_suA"/>
</dbReference>
<dbReference type="NCBIfam" id="TIGR00262">
    <property type="entry name" value="trpA"/>
    <property type="match status" value="1"/>
</dbReference>
<dbReference type="PANTHER" id="PTHR43406:SF1">
    <property type="entry name" value="TRYPTOPHAN SYNTHASE ALPHA CHAIN, CHLOROPLASTIC"/>
    <property type="match status" value="1"/>
</dbReference>
<dbReference type="PANTHER" id="PTHR43406">
    <property type="entry name" value="TRYPTOPHAN SYNTHASE, ALPHA CHAIN"/>
    <property type="match status" value="1"/>
</dbReference>
<dbReference type="Pfam" id="PF00290">
    <property type="entry name" value="Trp_syntA"/>
    <property type="match status" value="1"/>
</dbReference>
<dbReference type="SUPFAM" id="SSF51366">
    <property type="entry name" value="Ribulose-phoshate binding barrel"/>
    <property type="match status" value="1"/>
</dbReference>
<dbReference type="PROSITE" id="PS00167">
    <property type="entry name" value="TRP_SYNTHASE_ALPHA"/>
    <property type="match status" value="1"/>
</dbReference>
<organism>
    <name type="scientific">Geotalea daltonii (strain DSM 22248 / JCM 15807 / FRC-32)</name>
    <name type="common">Geobacter daltonii</name>
    <dbReference type="NCBI Taxonomy" id="316067"/>
    <lineage>
        <taxon>Bacteria</taxon>
        <taxon>Pseudomonadati</taxon>
        <taxon>Thermodesulfobacteriota</taxon>
        <taxon>Desulfuromonadia</taxon>
        <taxon>Geobacterales</taxon>
        <taxon>Geobacteraceae</taxon>
        <taxon>Geotalea</taxon>
    </lineage>
</organism>
<gene>
    <name evidence="1" type="primary">trpA</name>
    <name type="ordered locus">Geob_1866</name>
</gene>
<comment type="function">
    <text evidence="1">The alpha subunit is responsible for the aldol cleavage of indoleglycerol phosphate to indole and glyceraldehyde 3-phosphate.</text>
</comment>
<comment type="catalytic activity">
    <reaction evidence="1">
        <text>(1S,2R)-1-C-(indol-3-yl)glycerol 3-phosphate + L-serine = D-glyceraldehyde 3-phosphate + L-tryptophan + H2O</text>
        <dbReference type="Rhea" id="RHEA:10532"/>
        <dbReference type="ChEBI" id="CHEBI:15377"/>
        <dbReference type="ChEBI" id="CHEBI:33384"/>
        <dbReference type="ChEBI" id="CHEBI:57912"/>
        <dbReference type="ChEBI" id="CHEBI:58866"/>
        <dbReference type="ChEBI" id="CHEBI:59776"/>
        <dbReference type="EC" id="4.2.1.20"/>
    </reaction>
</comment>
<comment type="pathway">
    <text evidence="1">Amino-acid biosynthesis; L-tryptophan biosynthesis; L-tryptophan from chorismate: step 5/5.</text>
</comment>
<comment type="subunit">
    <text evidence="1">Tetramer of two alpha and two beta chains.</text>
</comment>
<comment type="similarity">
    <text evidence="1">Belongs to the TrpA family.</text>
</comment>
<reference key="1">
    <citation type="submission" date="2009-01" db="EMBL/GenBank/DDBJ databases">
        <title>Complete sequence of Geobacter sp. FRC-32.</title>
        <authorList>
            <consortium name="US DOE Joint Genome Institute"/>
            <person name="Lucas S."/>
            <person name="Copeland A."/>
            <person name="Lapidus A."/>
            <person name="Glavina del Rio T."/>
            <person name="Dalin E."/>
            <person name="Tice H."/>
            <person name="Bruce D."/>
            <person name="Goodwin L."/>
            <person name="Pitluck S."/>
            <person name="Saunders E."/>
            <person name="Brettin T."/>
            <person name="Detter J.C."/>
            <person name="Han C."/>
            <person name="Larimer F."/>
            <person name="Land M."/>
            <person name="Hauser L."/>
            <person name="Kyrpides N."/>
            <person name="Ovchinnikova G."/>
            <person name="Kostka J."/>
            <person name="Richardson P."/>
        </authorList>
    </citation>
    <scope>NUCLEOTIDE SEQUENCE [LARGE SCALE GENOMIC DNA]</scope>
    <source>
        <strain>DSM 22248 / JCM 15807 / FRC-32</strain>
    </source>
</reference>